<evidence type="ECO:0000255" key="1">
    <source>
        <dbReference type="HAMAP-Rule" id="MF_00019"/>
    </source>
</evidence>
<feature type="chain" id="PRO_1000070988" description="Phosphate acyltransferase">
    <location>
        <begin position="1"/>
        <end position="328"/>
    </location>
</feature>
<keyword id="KW-0963">Cytoplasm</keyword>
<keyword id="KW-0444">Lipid biosynthesis</keyword>
<keyword id="KW-0443">Lipid metabolism</keyword>
<keyword id="KW-0594">Phospholipid biosynthesis</keyword>
<keyword id="KW-1208">Phospholipid metabolism</keyword>
<keyword id="KW-0808">Transferase</keyword>
<gene>
    <name evidence="1" type="primary">plsX</name>
    <name type="ordered locus">C8J_0306</name>
</gene>
<organism>
    <name type="scientific">Campylobacter jejuni subsp. jejuni serotype O:6 (strain 81116 / NCTC 11828)</name>
    <dbReference type="NCBI Taxonomy" id="407148"/>
    <lineage>
        <taxon>Bacteria</taxon>
        <taxon>Pseudomonadati</taxon>
        <taxon>Campylobacterota</taxon>
        <taxon>Epsilonproteobacteria</taxon>
        <taxon>Campylobacterales</taxon>
        <taxon>Campylobacteraceae</taxon>
        <taxon>Campylobacter</taxon>
    </lineage>
</organism>
<proteinExistence type="inferred from homology"/>
<dbReference type="EC" id="2.3.1.274" evidence="1"/>
<dbReference type="EMBL" id="CP000814">
    <property type="protein sequence ID" value="ABV51905.1"/>
    <property type="molecule type" value="Genomic_DNA"/>
</dbReference>
<dbReference type="RefSeq" id="WP_002854249.1">
    <property type="nucleotide sequence ID" value="NC_009839.1"/>
</dbReference>
<dbReference type="SMR" id="A8FKB8"/>
<dbReference type="KEGG" id="cju:C8J_0306"/>
<dbReference type="HOGENOM" id="CLU_039379_1_1_7"/>
<dbReference type="UniPathway" id="UPA00085"/>
<dbReference type="GO" id="GO:0005737">
    <property type="term" value="C:cytoplasm"/>
    <property type="evidence" value="ECO:0007669"/>
    <property type="project" value="UniProtKB-SubCell"/>
</dbReference>
<dbReference type="GO" id="GO:0043811">
    <property type="term" value="F:phosphate:acyl-[acyl carrier protein] acyltransferase activity"/>
    <property type="evidence" value="ECO:0007669"/>
    <property type="project" value="UniProtKB-UniRule"/>
</dbReference>
<dbReference type="GO" id="GO:0006633">
    <property type="term" value="P:fatty acid biosynthetic process"/>
    <property type="evidence" value="ECO:0007669"/>
    <property type="project" value="UniProtKB-UniRule"/>
</dbReference>
<dbReference type="GO" id="GO:0008654">
    <property type="term" value="P:phospholipid biosynthetic process"/>
    <property type="evidence" value="ECO:0007669"/>
    <property type="project" value="UniProtKB-KW"/>
</dbReference>
<dbReference type="Gene3D" id="3.40.718.10">
    <property type="entry name" value="Isopropylmalate Dehydrogenase"/>
    <property type="match status" value="1"/>
</dbReference>
<dbReference type="HAMAP" id="MF_00019">
    <property type="entry name" value="PlsX"/>
    <property type="match status" value="1"/>
</dbReference>
<dbReference type="InterPro" id="IPR003664">
    <property type="entry name" value="FA_synthesis"/>
</dbReference>
<dbReference type="InterPro" id="IPR012281">
    <property type="entry name" value="Phospholipid_synth_PlsX-like"/>
</dbReference>
<dbReference type="NCBIfam" id="TIGR00182">
    <property type="entry name" value="plsX"/>
    <property type="match status" value="1"/>
</dbReference>
<dbReference type="PANTHER" id="PTHR30100">
    <property type="entry name" value="FATTY ACID/PHOSPHOLIPID SYNTHESIS PROTEIN PLSX"/>
    <property type="match status" value="1"/>
</dbReference>
<dbReference type="PANTHER" id="PTHR30100:SF1">
    <property type="entry name" value="PHOSPHATE ACYLTRANSFERASE"/>
    <property type="match status" value="1"/>
</dbReference>
<dbReference type="Pfam" id="PF02504">
    <property type="entry name" value="FA_synthesis"/>
    <property type="match status" value="1"/>
</dbReference>
<dbReference type="PIRSF" id="PIRSF002465">
    <property type="entry name" value="Phsphlp_syn_PlsX"/>
    <property type="match status" value="1"/>
</dbReference>
<dbReference type="SUPFAM" id="SSF53659">
    <property type="entry name" value="Isocitrate/Isopropylmalate dehydrogenase-like"/>
    <property type="match status" value="1"/>
</dbReference>
<accession>A8FKB8</accession>
<comment type="function">
    <text evidence="1">Catalyzes the reversible formation of acyl-phosphate (acyl-PO(4)) from acyl-[acyl-carrier-protein] (acyl-ACP). This enzyme utilizes acyl-ACP as fatty acyl donor, but not acyl-CoA.</text>
</comment>
<comment type="catalytic activity">
    <reaction evidence="1">
        <text>a fatty acyl-[ACP] + phosphate = an acyl phosphate + holo-[ACP]</text>
        <dbReference type="Rhea" id="RHEA:42292"/>
        <dbReference type="Rhea" id="RHEA-COMP:9685"/>
        <dbReference type="Rhea" id="RHEA-COMP:14125"/>
        <dbReference type="ChEBI" id="CHEBI:43474"/>
        <dbReference type="ChEBI" id="CHEBI:59918"/>
        <dbReference type="ChEBI" id="CHEBI:64479"/>
        <dbReference type="ChEBI" id="CHEBI:138651"/>
        <dbReference type="EC" id="2.3.1.274"/>
    </reaction>
</comment>
<comment type="pathway">
    <text evidence="1">Lipid metabolism; phospholipid metabolism.</text>
</comment>
<comment type="subunit">
    <text evidence="1">Homodimer. Probably interacts with PlsY.</text>
</comment>
<comment type="subcellular location">
    <subcellularLocation>
        <location evidence="1">Cytoplasm</location>
    </subcellularLocation>
    <text evidence="1">Associated with the membrane possibly through PlsY.</text>
</comment>
<comment type="similarity">
    <text evidence="1">Belongs to the PlsX family.</text>
</comment>
<sequence length="328" mass="35878">MINIAIDAMGGDFGEKPIIEGVLKALEAKPFNAILVGNSKILKPLIPKKLEQYIQYEEASEIFSMNENATDALKNKETTIYKAINLLKEKKVDAVVSAGHSGASMSLATLRLGRLKGISRPAIATLMPNIINKTLLLDVGANTDCKAENLFQFAIMGEVYARAIMQIQKPRLALLSNGEEECKGNELTKESHQLMKKIPNFIGNAEGRDIFNGEIDVLVCDGFDGNVILKACEGVATAIFQLLKNEVKQSFISKIGALLMKPSFKKLKKHTDWQEYGGAPLLGVNGCVIISHGKSDSRAIKNAIFQAINFSQSHINELIENELGKYNA</sequence>
<name>PLSX_CAMJ8</name>
<protein>
    <recommendedName>
        <fullName evidence="1">Phosphate acyltransferase</fullName>
        <ecNumber evidence="1">2.3.1.274</ecNumber>
    </recommendedName>
    <alternativeName>
        <fullName evidence="1">Acyl-ACP phosphotransacylase</fullName>
    </alternativeName>
    <alternativeName>
        <fullName evidence="1">Acyl-[acyl-carrier-protein]--phosphate acyltransferase</fullName>
    </alternativeName>
    <alternativeName>
        <fullName evidence="1">Phosphate-acyl-ACP acyltransferase</fullName>
    </alternativeName>
</protein>
<reference key="1">
    <citation type="journal article" date="2007" name="J. Bacteriol.">
        <title>The complete genome sequence of Campylobacter jejuni strain 81116 (NCTC11828).</title>
        <authorList>
            <person name="Pearson B.M."/>
            <person name="Gaskin D.J.H."/>
            <person name="Segers R.P.A.M."/>
            <person name="Wells J.M."/>
            <person name="Nuijten P.J.M."/>
            <person name="van Vliet A.H.M."/>
        </authorList>
    </citation>
    <scope>NUCLEOTIDE SEQUENCE [LARGE SCALE GENOMIC DNA]</scope>
    <source>
        <strain>81116 / NCTC 11828</strain>
    </source>
</reference>